<reference key="1">
    <citation type="journal article" date="2004" name="Nucleic Acids Res.">
        <title>Whole genome comparisons of serotype 4b and 1/2a strains of the food-borne pathogen Listeria monocytogenes reveal new insights into the core genome components of this species.</title>
        <authorList>
            <person name="Nelson K.E."/>
            <person name="Fouts D.E."/>
            <person name="Mongodin E.F."/>
            <person name="Ravel J."/>
            <person name="DeBoy R.T."/>
            <person name="Kolonay J.F."/>
            <person name="Rasko D.A."/>
            <person name="Angiuoli S.V."/>
            <person name="Gill S.R."/>
            <person name="Paulsen I.T."/>
            <person name="Peterson J.D."/>
            <person name="White O."/>
            <person name="Nelson W.C."/>
            <person name="Nierman W.C."/>
            <person name="Beanan M.J."/>
            <person name="Brinkac L.M."/>
            <person name="Daugherty S.C."/>
            <person name="Dodson R.J."/>
            <person name="Durkin A.S."/>
            <person name="Madupu R."/>
            <person name="Haft D.H."/>
            <person name="Selengut J."/>
            <person name="Van Aken S.E."/>
            <person name="Khouri H.M."/>
            <person name="Fedorova N."/>
            <person name="Forberger H.A."/>
            <person name="Tran B."/>
            <person name="Kathariou S."/>
            <person name="Wonderling L.D."/>
            <person name="Uhlich G.A."/>
            <person name="Bayles D.O."/>
            <person name="Luchansky J.B."/>
            <person name="Fraser C.M."/>
        </authorList>
    </citation>
    <scope>NUCLEOTIDE SEQUENCE [LARGE SCALE GENOMIC DNA]</scope>
    <source>
        <strain>F2365</strain>
    </source>
</reference>
<comment type="function">
    <text evidence="1">IGPS catalyzes the conversion of PRFAR and glutamine to IGP, AICAR and glutamate. The HisF subunit catalyzes the cyclization activity that produces IGP and AICAR from PRFAR using the ammonia provided by the HisH subunit.</text>
</comment>
<comment type="catalytic activity">
    <reaction evidence="1">
        <text>5-[(5-phospho-1-deoxy-D-ribulos-1-ylimino)methylamino]-1-(5-phospho-beta-D-ribosyl)imidazole-4-carboxamide + L-glutamine = D-erythro-1-(imidazol-4-yl)glycerol 3-phosphate + 5-amino-1-(5-phospho-beta-D-ribosyl)imidazole-4-carboxamide + L-glutamate + H(+)</text>
        <dbReference type="Rhea" id="RHEA:24793"/>
        <dbReference type="ChEBI" id="CHEBI:15378"/>
        <dbReference type="ChEBI" id="CHEBI:29985"/>
        <dbReference type="ChEBI" id="CHEBI:58278"/>
        <dbReference type="ChEBI" id="CHEBI:58359"/>
        <dbReference type="ChEBI" id="CHEBI:58475"/>
        <dbReference type="ChEBI" id="CHEBI:58525"/>
        <dbReference type="EC" id="4.3.2.10"/>
    </reaction>
</comment>
<comment type="pathway">
    <text evidence="1">Amino-acid biosynthesis; L-histidine biosynthesis; L-histidine from 5-phospho-alpha-D-ribose 1-diphosphate: step 5/9.</text>
</comment>
<comment type="subunit">
    <text evidence="1">Heterodimer of HisH and HisF.</text>
</comment>
<comment type="subcellular location">
    <subcellularLocation>
        <location evidence="1">Cytoplasm</location>
    </subcellularLocation>
</comment>
<comment type="similarity">
    <text evidence="1">Belongs to the HisA/HisF family.</text>
</comment>
<feature type="chain" id="PRO_0000142179" description="Imidazole glycerol phosphate synthase subunit HisF">
    <location>
        <begin position="1"/>
        <end position="251"/>
    </location>
</feature>
<feature type="active site" evidence="1">
    <location>
        <position position="11"/>
    </location>
</feature>
<feature type="active site" evidence="1">
    <location>
        <position position="130"/>
    </location>
</feature>
<keyword id="KW-0028">Amino-acid biosynthesis</keyword>
<keyword id="KW-0963">Cytoplasm</keyword>
<keyword id="KW-0368">Histidine biosynthesis</keyword>
<keyword id="KW-0456">Lyase</keyword>
<name>HIS6_LISMF</name>
<evidence type="ECO:0000255" key="1">
    <source>
        <dbReference type="HAMAP-Rule" id="MF_01013"/>
    </source>
</evidence>
<protein>
    <recommendedName>
        <fullName evidence="1">Imidazole glycerol phosphate synthase subunit HisF</fullName>
        <ecNumber evidence="1">4.3.2.10</ecNumber>
    </recommendedName>
    <alternativeName>
        <fullName evidence="1">IGP synthase cyclase subunit</fullName>
    </alternativeName>
    <alternativeName>
        <fullName evidence="1">IGP synthase subunit HisF</fullName>
    </alternativeName>
    <alternativeName>
        <fullName evidence="1">ImGP synthase subunit HisF</fullName>
        <shortName evidence="1">IGPS subunit HisF</shortName>
    </alternativeName>
</protein>
<dbReference type="EC" id="4.3.2.10" evidence="1"/>
<dbReference type="EMBL" id="AE017262">
    <property type="protein sequence ID" value="AAT03374.1"/>
    <property type="molecule type" value="Genomic_DNA"/>
</dbReference>
<dbReference type="RefSeq" id="WP_003725465.1">
    <property type="nucleotide sequence ID" value="NC_002973.6"/>
</dbReference>
<dbReference type="SMR" id="Q722Y7"/>
<dbReference type="KEGG" id="lmf:LMOf2365_0592"/>
<dbReference type="HOGENOM" id="CLU_048577_4_0_9"/>
<dbReference type="UniPathway" id="UPA00031">
    <property type="reaction ID" value="UER00010"/>
</dbReference>
<dbReference type="GO" id="GO:0005737">
    <property type="term" value="C:cytoplasm"/>
    <property type="evidence" value="ECO:0007669"/>
    <property type="project" value="UniProtKB-SubCell"/>
</dbReference>
<dbReference type="GO" id="GO:0000107">
    <property type="term" value="F:imidazoleglycerol-phosphate synthase activity"/>
    <property type="evidence" value="ECO:0007669"/>
    <property type="project" value="UniProtKB-UniRule"/>
</dbReference>
<dbReference type="GO" id="GO:0016829">
    <property type="term" value="F:lyase activity"/>
    <property type="evidence" value="ECO:0007669"/>
    <property type="project" value="UniProtKB-KW"/>
</dbReference>
<dbReference type="GO" id="GO:0000105">
    <property type="term" value="P:L-histidine biosynthetic process"/>
    <property type="evidence" value="ECO:0007669"/>
    <property type="project" value="UniProtKB-UniRule"/>
</dbReference>
<dbReference type="CDD" id="cd04731">
    <property type="entry name" value="HisF"/>
    <property type="match status" value="1"/>
</dbReference>
<dbReference type="FunFam" id="3.20.20.70:FF:000006">
    <property type="entry name" value="Imidazole glycerol phosphate synthase subunit HisF"/>
    <property type="match status" value="1"/>
</dbReference>
<dbReference type="Gene3D" id="3.20.20.70">
    <property type="entry name" value="Aldolase class I"/>
    <property type="match status" value="1"/>
</dbReference>
<dbReference type="HAMAP" id="MF_01013">
    <property type="entry name" value="HisF"/>
    <property type="match status" value="1"/>
</dbReference>
<dbReference type="InterPro" id="IPR013785">
    <property type="entry name" value="Aldolase_TIM"/>
</dbReference>
<dbReference type="InterPro" id="IPR006062">
    <property type="entry name" value="His_biosynth"/>
</dbReference>
<dbReference type="InterPro" id="IPR004651">
    <property type="entry name" value="HisF"/>
</dbReference>
<dbReference type="InterPro" id="IPR050064">
    <property type="entry name" value="IGPS_HisA/HisF"/>
</dbReference>
<dbReference type="InterPro" id="IPR011060">
    <property type="entry name" value="RibuloseP-bd_barrel"/>
</dbReference>
<dbReference type="NCBIfam" id="TIGR00735">
    <property type="entry name" value="hisF"/>
    <property type="match status" value="1"/>
</dbReference>
<dbReference type="PANTHER" id="PTHR21235:SF2">
    <property type="entry name" value="IMIDAZOLE GLYCEROL PHOSPHATE SYNTHASE HISHF"/>
    <property type="match status" value="1"/>
</dbReference>
<dbReference type="PANTHER" id="PTHR21235">
    <property type="entry name" value="IMIDAZOLE GLYCEROL PHOSPHATE SYNTHASE SUBUNIT HISF/H IGP SYNTHASE SUBUNIT HISF/H"/>
    <property type="match status" value="1"/>
</dbReference>
<dbReference type="Pfam" id="PF00977">
    <property type="entry name" value="His_biosynth"/>
    <property type="match status" value="1"/>
</dbReference>
<dbReference type="SUPFAM" id="SSF51366">
    <property type="entry name" value="Ribulose-phoshate binding barrel"/>
    <property type="match status" value="1"/>
</dbReference>
<proteinExistence type="inferred from homology"/>
<sequence length="251" mass="26446">MLTKRIIPCLDVTAGRVVKGVNFVSLTDVGDPVEIAKAYNEAGADELVFLDITATVELRQTMIDVVERTAEQVFIPLTVGGGISSVSDMKELLQAGADKISLNSAAIKRPELIQEGAAKFGNQCIVVAIDAKWNGTNWSVFTRGGRNDTGLDAIEWAKKAVQLGAGEILLTSMDGDGTKNGYDIPLTKAISAAVSVPVIASGGCGNAAHMAEVFEKTKATAALAASIFHYGELSIKNVKTTLLEKGVNIRP</sequence>
<organism>
    <name type="scientific">Listeria monocytogenes serotype 4b (strain F2365)</name>
    <dbReference type="NCBI Taxonomy" id="265669"/>
    <lineage>
        <taxon>Bacteria</taxon>
        <taxon>Bacillati</taxon>
        <taxon>Bacillota</taxon>
        <taxon>Bacilli</taxon>
        <taxon>Bacillales</taxon>
        <taxon>Listeriaceae</taxon>
        <taxon>Listeria</taxon>
    </lineage>
</organism>
<gene>
    <name evidence="1" type="primary">hisF</name>
    <name type="ordered locus">LMOf2365_0592</name>
</gene>
<accession>Q722Y7</accession>